<gene>
    <name type="primary">PRA1B1</name>
    <name type="synonym">PRA6</name>
    <name type="ordered locus">At3g56110</name>
    <name type="ORF">F18O21.70</name>
</gene>
<organism>
    <name type="scientific">Arabidopsis thaliana</name>
    <name type="common">Mouse-ear cress</name>
    <dbReference type="NCBI Taxonomy" id="3702"/>
    <lineage>
        <taxon>Eukaryota</taxon>
        <taxon>Viridiplantae</taxon>
        <taxon>Streptophyta</taxon>
        <taxon>Embryophyta</taxon>
        <taxon>Tracheophyta</taxon>
        <taxon>Spermatophyta</taxon>
        <taxon>Magnoliopsida</taxon>
        <taxon>eudicotyledons</taxon>
        <taxon>Gunneridae</taxon>
        <taxon>Pentapetalae</taxon>
        <taxon>rosids</taxon>
        <taxon>malvids</taxon>
        <taxon>Brassicales</taxon>
        <taxon>Brassicaceae</taxon>
        <taxon>Camelineae</taxon>
        <taxon>Arabidopsis</taxon>
    </lineage>
</organism>
<sequence length="209" mass="22618">MATPPTLPVTNQQAVQSQPPINTPAFRTFFSRLSTSIRDGLSQRRPWTELIDRSSMARPESLTDALSRIRKNLAYFKVNYVAIVSLVLAFSLFSHPLSLLVLIGLLGGWMFLYLFRPSDQPLVVFGRTFSDRETLLALVLSTIVVVFMTSVGSLLTSALMIGVAIVCVHGAFVVPDDLFLDEQEPANAGLLSFLGGSATSAAAAVSGRV</sequence>
<name>PR1B1_ARATH</name>
<comment type="function">
    <text evidence="1">May be involved in both secretory and endocytic intracellular trafficking in the endosomal/prevacuolar compartments.</text>
</comment>
<comment type="subunit">
    <text evidence="3">Can form homodimer. Interacts with PRA1B2, PRA1B3, PRA1B4, PRA1B5, PRA1B6 and PRA1E.</text>
</comment>
<comment type="subcellular location">
    <subcellularLocation>
        <location evidence="3">Endosome membrane</location>
        <topology evidence="3">Multi-pass membrane protein</topology>
    </subcellularLocation>
</comment>
<comment type="similarity">
    <text evidence="4">Belongs to the PRA1 family.</text>
</comment>
<dbReference type="EMBL" id="AJ249560">
    <property type="protein sequence ID" value="CAC80650.1"/>
    <property type="molecule type" value="mRNA"/>
</dbReference>
<dbReference type="EMBL" id="AL163763">
    <property type="protein sequence ID" value="CAB87410.1"/>
    <property type="molecule type" value="Genomic_DNA"/>
</dbReference>
<dbReference type="EMBL" id="CP002686">
    <property type="protein sequence ID" value="AEE79478.1"/>
    <property type="molecule type" value="Genomic_DNA"/>
</dbReference>
<dbReference type="EMBL" id="CP002686">
    <property type="protein sequence ID" value="AEE79479.1"/>
    <property type="molecule type" value="Genomic_DNA"/>
</dbReference>
<dbReference type="EMBL" id="CP002686">
    <property type="protein sequence ID" value="ANM65409.1"/>
    <property type="molecule type" value="Genomic_DNA"/>
</dbReference>
<dbReference type="EMBL" id="CP002686">
    <property type="protein sequence ID" value="ANM65410.1"/>
    <property type="molecule type" value="Genomic_DNA"/>
</dbReference>
<dbReference type="EMBL" id="AY054569">
    <property type="protein sequence ID" value="AAK96760.1"/>
    <property type="molecule type" value="mRNA"/>
</dbReference>
<dbReference type="EMBL" id="AY064659">
    <property type="protein sequence ID" value="AAL47368.1"/>
    <property type="molecule type" value="mRNA"/>
</dbReference>
<dbReference type="EMBL" id="AY084557">
    <property type="protein sequence ID" value="AAM61124.1"/>
    <property type="molecule type" value="mRNA"/>
</dbReference>
<dbReference type="PIR" id="T47728">
    <property type="entry name" value="T47728"/>
</dbReference>
<dbReference type="BioGRID" id="10093">
    <property type="interactions" value="3"/>
</dbReference>
<dbReference type="FunCoup" id="Q9LYN0">
    <property type="interactions" value="2550"/>
</dbReference>
<dbReference type="IntAct" id="Q9LYN0">
    <property type="interactions" value="3"/>
</dbReference>
<dbReference type="STRING" id="3702.Q9LYN0"/>
<dbReference type="TCDB" id="9.A.49.1.4">
    <property type="family name" value="the prenylated rab acceptor protein 1 (pra1) family"/>
</dbReference>
<dbReference type="iPTMnet" id="Q9LYN0"/>
<dbReference type="PaxDb" id="3702-AT3G56110.1"/>
<dbReference type="ProteomicsDB" id="226499"/>
<dbReference type="EnsemblPlants" id="AT3G56110.1">
    <property type="protein sequence ID" value="AT3G56110.1"/>
    <property type="gene ID" value="AT3G56110"/>
</dbReference>
<dbReference type="EnsemblPlants" id="AT3G56110.2">
    <property type="protein sequence ID" value="AT3G56110.2"/>
    <property type="gene ID" value="AT3G56110"/>
</dbReference>
<dbReference type="EnsemblPlants" id="AT3G56110.3">
    <property type="protein sequence ID" value="AT3G56110.3"/>
    <property type="gene ID" value="AT3G56110"/>
</dbReference>
<dbReference type="EnsemblPlants" id="AT3G56110.4">
    <property type="protein sequence ID" value="AT3G56110.4"/>
    <property type="gene ID" value="AT3G56110"/>
</dbReference>
<dbReference type="Gramene" id="AT3G56110.1">
    <property type="protein sequence ID" value="AT3G56110.1"/>
    <property type="gene ID" value="AT3G56110"/>
</dbReference>
<dbReference type="Gramene" id="AT3G56110.2">
    <property type="protein sequence ID" value="AT3G56110.2"/>
    <property type="gene ID" value="AT3G56110"/>
</dbReference>
<dbReference type="Gramene" id="AT3G56110.3">
    <property type="protein sequence ID" value="AT3G56110.3"/>
    <property type="gene ID" value="AT3G56110"/>
</dbReference>
<dbReference type="Gramene" id="AT3G56110.4">
    <property type="protein sequence ID" value="AT3G56110.4"/>
    <property type="gene ID" value="AT3G56110"/>
</dbReference>
<dbReference type="KEGG" id="ath:AT3G56110"/>
<dbReference type="Araport" id="AT3G56110"/>
<dbReference type="TAIR" id="AT3G56110">
    <property type="gene designation" value="PRA1.B1"/>
</dbReference>
<dbReference type="eggNOG" id="KOG3142">
    <property type="taxonomic scope" value="Eukaryota"/>
</dbReference>
<dbReference type="HOGENOM" id="CLU_060198_1_0_1"/>
<dbReference type="InParanoid" id="Q9LYN0"/>
<dbReference type="OMA" id="FRINYVT"/>
<dbReference type="OrthoDB" id="63113at2759"/>
<dbReference type="PhylomeDB" id="Q9LYN0"/>
<dbReference type="PRO" id="PR:Q9LYN0"/>
<dbReference type="Proteomes" id="UP000006548">
    <property type="component" value="Chromosome 3"/>
</dbReference>
<dbReference type="ExpressionAtlas" id="Q9LYN0">
    <property type="expression patterns" value="baseline and differential"/>
</dbReference>
<dbReference type="GO" id="GO:0005829">
    <property type="term" value="C:cytosol"/>
    <property type="evidence" value="ECO:0007005"/>
    <property type="project" value="TAIR"/>
</dbReference>
<dbReference type="GO" id="GO:0005783">
    <property type="term" value="C:endoplasmic reticulum"/>
    <property type="evidence" value="ECO:0000314"/>
    <property type="project" value="TAIR"/>
</dbReference>
<dbReference type="GO" id="GO:0010008">
    <property type="term" value="C:endosome membrane"/>
    <property type="evidence" value="ECO:0007669"/>
    <property type="project" value="UniProtKB-SubCell"/>
</dbReference>
<dbReference type="GO" id="GO:0005794">
    <property type="term" value="C:Golgi apparatus"/>
    <property type="evidence" value="ECO:0007005"/>
    <property type="project" value="TAIR"/>
</dbReference>
<dbReference type="GO" id="GO:0000138">
    <property type="term" value="C:Golgi trans cisterna"/>
    <property type="evidence" value="ECO:0007005"/>
    <property type="project" value="TAIR"/>
</dbReference>
<dbReference type="GO" id="GO:0016192">
    <property type="term" value="P:vesicle-mediated transport"/>
    <property type="evidence" value="ECO:0000314"/>
    <property type="project" value="TAIR"/>
</dbReference>
<dbReference type="InterPro" id="IPR004895">
    <property type="entry name" value="Prenylated_rab_accept_PRA1"/>
</dbReference>
<dbReference type="PANTHER" id="PTHR19317:SF95">
    <property type="entry name" value="PRA1 FAMILY PROTEIN B1"/>
    <property type="match status" value="1"/>
</dbReference>
<dbReference type="PANTHER" id="PTHR19317">
    <property type="entry name" value="PRENYLATED RAB ACCEPTOR 1-RELATED"/>
    <property type="match status" value="1"/>
</dbReference>
<dbReference type="Pfam" id="PF03208">
    <property type="entry name" value="PRA1"/>
    <property type="match status" value="1"/>
</dbReference>
<keyword id="KW-0007">Acetylation</keyword>
<keyword id="KW-0967">Endosome</keyword>
<keyword id="KW-0472">Membrane</keyword>
<keyword id="KW-1185">Reference proteome</keyword>
<keyword id="KW-0812">Transmembrane</keyword>
<keyword id="KW-1133">Transmembrane helix</keyword>
<keyword id="KW-0813">Transport</keyword>
<feature type="initiator methionine" description="Removed" evidence="5">
    <location>
        <position position="1"/>
    </location>
</feature>
<feature type="chain" id="PRO_0000352250" description="PRA1 family protein B1">
    <location>
        <begin position="2"/>
        <end position="209"/>
    </location>
</feature>
<feature type="transmembrane region" description="Helical" evidence="2">
    <location>
        <begin position="73"/>
        <end position="93"/>
    </location>
</feature>
<feature type="transmembrane region" description="Helical" evidence="2">
    <location>
        <begin position="95"/>
        <end position="115"/>
    </location>
</feature>
<feature type="transmembrane region" description="Helical" evidence="2">
    <location>
        <begin position="133"/>
        <end position="153"/>
    </location>
</feature>
<feature type="transmembrane region" description="Helical" evidence="2">
    <location>
        <begin position="154"/>
        <end position="174"/>
    </location>
</feature>
<feature type="transmembrane region" description="Helical" evidence="2">
    <location>
        <begin position="185"/>
        <end position="205"/>
    </location>
</feature>
<feature type="modified residue" description="N-acetylalanine" evidence="5">
    <location>
        <position position="2"/>
    </location>
</feature>
<feature type="sequence conflict" description="In Ref. 4; AAK96760/AAL47368." evidence="4" ref="4">
    <original>Q</original>
    <variation>R</variation>
    <location>
        <position position="18"/>
    </location>
</feature>
<protein>
    <recommendedName>
        <fullName>PRA1 family protein B1</fullName>
        <shortName>AtPRA1.B1</shortName>
    </recommendedName>
    <alternativeName>
        <fullName>Prenylated Rab acceptor 6</fullName>
    </alternativeName>
</protein>
<accession>Q9LYN0</accession>
<accession>Q940J2</accession>
<proteinExistence type="evidence at protein level"/>
<reference key="1">
    <citation type="submission" date="1999-09" db="EMBL/GenBank/DDBJ databases">
        <title>Isolation and characterization of members of a new protein family from Arabidopsis thaliana that specifically interact with prenylated Rab proteins and SNAREs.</title>
        <authorList>
            <person name="Pay A."/>
            <person name="Nagy F."/>
            <person name="Merkle T."/>
        </authorList>
    </citation>
    <scope>NUCLEOTIDE SEQUENCE [MRNA]</scope>
    <source>
        <strain>cv. Columbia</strain>
    </source>
</reference>
<reference key="2">
    <citation type="journal article" date="2000" name="Nature">
        <title>Sequence and analysis of chromosome 3 of the plant Arabidopsis thaliana.</title>
        <authorList>
            <person name="Salanoubat M."/>
            <person name="Lemcke K."/>
            <person name="Rieger M."/>
            <person name="Ansorge W."/>
            <person name="Unseld M."/>
            <person name="Fartmann B."/>
            <person name="Valle G."/>
            <person name="Bloecker H."/>
            <person name="Perez-Alonso M."/>
            <person name="Obermaier B."/>
            <person name="Delseny M."/>
            <person name="Boutry M."/>
            <person name="Grivell L.A."/>
            <person name="Mache R."/>
            <person name="Puigdomenech P."/>
            <person name="De Simone V."/>
            <person name="Choisne N."/>
            <person name="Artiguenave F."/>
            <person name="Robert C."/>
            <person name="Brottier P."/>
            <person name="Wincker P."/>
            <person name="Cattolico L."/>
            <person name="Weissenbach J."/>
            <person name="Saurin W."/>
            <person name="Quetier F."/>
            <person name="Schaefer M."/>
            <person name="Mueller-Auer S."/>
            <person name="Gabel C."/>
            <person name="Fuchs M."/>
            <person name="Benes V."/>
            <person name="Wurmbach E."/>
            <person name="Drzonek H."/>
            <person name="Erfle H."/>
            <person name="Jordan N."/>
            <person name="Bangert S."/>
            <person name="Wiedelmann R."/>
            <person name="Kranz H."/>
            <person name="Voss H."/>
            <person name="Holland R."/>
            <person name="Brandt P."/>
            <person name="Nyakatura G."/>
            <person name="Vezzi A."/>
            <person name="D'Angelo M."/>
            <person name="Pallavicini A."/>
            <person name="Toppo S."/>
            <person name="Simionati B."/>
            <person name="Conrad A."/>
            <person name="Hornischer K."/>
            <person name="Kauer G."/>
            <person name="Loehnert T.-H."/>
            <person name="Nordsiek G."/>
            <person name="Reichelt J."/>
            <person name="Scharfe M."/>
            <person name="Schoen O."/>
            <person name="Bargues M."/>
            <person name="Terol J."/>
            <person name="Climent J."/>
            <person name="Navarro P."/>
            <person name="Collado C."/>
            <person name="Perez-Perez A."/>
            <person name="Ottenwaelder B."/>
            <person name="Duchemin D."/>
            <person name="Cooke R."/>
            <person name="Laudie M."/>
            <person name="Berger-Llauro C."/>
            <person name="Purnelle B."/>
            <person name="Masuy D."/>
            <person name="de Haan M."/>
            <person name="Maarse A.C."/>
            <person name="Alcaraz J.-P."/>
            <person name="Cottet A."/>
            <person name="Casacuberta E."/>
            <person name="Monfort A."/>
            <person name="Argiriou A."/>
            <person name="Flores M."/>
            <person name="Liguori R."/>
            <person name="Vitale D."/>
            <person name="Mannhaupt G."/>
            <person name="Haase D."/>
            <person name="Schoof H."/>
            <person name="Rudd S."/>
            <person name="Zaccaria P."/>
            <person name="Mewes H.-W."/>
            <person name="Mayer K.F.X."/>
            <person name="Kaul S."/>
            <person name="Town C.D."/>
            <person name="Koo H.L."/>
            <person name="Tallon L.J."/>
            <person name="Jenkins J."/>
            <person name="Rooney T."/>
            <person name="Rizzo M."/>
            <person name="Walts A."/>
            <person name="Utterback T."/>
            <person name="Fujii C.Y."/>
            <person name="Shea T.P."/>
            <person name="Creasy T.H."/>
            <person name="Haas B."/>
            <person name="Maiti R."/>
            <person name="Wu D."/>
            <person name="Peterson J."/>
            <person name="Van Aken S."/>
            <person name="Pai G."/>
            <person name="Militscher J."/>
            <person name="Sellers P."/>
            <person name="Gill J.E."/>
            <person name="Feldblyum T.V."/>
            <person name="Preuss D."/>
            <person name="Lin X."/>
            <person name="Nierman W.C."/>
            <person name="Salzberg S.L."/>
            <person name="White O."/>
            <person name="Venter J.C."/>
            <person name="Fraser C.M."/>
            <person name="Kaneko T."/>
            <person name="Nakamura Y."/>
            <person name="Sato S."/>
            <person name="Kato T."/>
            <person name="Asamizu E."/>
            <person name="Sasamoto S."/>
            <person name="Kimura T."/>
            <person name="Idesawa K."/>
            <person name="Kawashima K."/>
            <person name="Kishida Y."/>
            <person name="Kiyokawa C."/>
            <person name="Kohara M."/>
            <person name="Matsumoto M."/>
            <person name="Matsuno A."/>
            <person name="Muraki A."/>
            <person name="Nakayama S."/>
            <person name="Nakazaki N."/>
            <person name="Shinpo S."/>
            <person name="Takeuchi C."/>
            <person name="Wada T."/>
            <person name="Watanabe A."/>
            <person name="Yamada M."/>
            <person name="Yasuda M."/>
            <person name="Tabata S."/>
        </authorList>
    </citation>
    <scope>NUCLEOTIDE SEQUENCE [LARGE SCALE GENOMIC DNA]</scope>
    <source>
        <strain>cv. Columbia</strain>
    </source>
</reference>
<reference key="3">
    <citation type="journal article" date="2017" name="Plant J.">
        <title>Araport11: a complete reannotation of the Arabidopsis thaliana reference genome.</title>
        <authorList>
            <person name="Cheng C.Y."/>
            <person name="Krishnakumar V."/>
            <person name="Chan A.P."/>
            <person name="Thibaud-Nissen F."/>
            <person name="Schobel S."/>
            <person name="Town C.D."/>
        </authorList>
    </citation>
    <scope>GENOME REANNOTATION</scope>
    <source>
        <strain>cv. Columbia</strain>
    </source>
</reference>
<reference key="4">
    <citation type="journal article" date="2003" name="Science">
        <title>Empirical analysis of transcriptional activity in the Arabidopsis genome.</title>
        <authorList>
            <person name="Yamada K."/>
            <person name="Lim J."/>
            <person name="Dale J.M."/>
            <person name="Chen H."/>
            <person name="Shinn P."/>
            <person name="Palm C.J."/>
            <person name="Southwick A.M."/>
            <person name="Wu H.C."/>
            <person name="Kim C.J."/>
            <person name="Nguyen M."/>
            <person name="Pham P.K."/>
            <person name="Cheuk R.F."/>
            <person name="Karlin-Newmann G."/>
            <person name="Liu S.X."/>
            <person name="Lam B."/>
            <person name="Sakano H."/>
            <person name="Wu T."/>
            <person name="Yu G."/>
            <person name="Miranda M."/>
            <person name="Quach H.L."/>
            <person name="Tripp M."/>
            <person name="Chang C.H."/>
            <person name="Lee J.M."/>
            <person name="Toriumi M.J."/>
            <person name="Chan M.M."/>
            <person name="Tang C.C."/>
            <person name="Onodera C.S."/>
            <person name="Deng J.M."/>
            <person name="Akiyama K."/>
            <person name="Ansari Y."/>
            <person name="Arakawa T."/>
            <person name="Banh J."/>
            <person name="Banno F."/>
            <person name="Bowser L."/>
            <person name="Brooks S.Y."/>
            <person name="Carninci P."/>
            <person name="Chao Q."/>
            <person name="Choy N."/>
            <person name="Enju A."/>
            <person name="Goldsmith A.D."/>
            <person name="Gurjal M."/>
            <person name="Hansen N.F."/>
            <person name="Hayashizaki Y."/>
            <person name="Johnson-Hopson C."/>
            <person name="Hsuan V.W."/>
            <person name="Iida K."/>
            <person name="Karnes M."/>
            <person name="Khan S."/>
            <person name="Koesema E."/>
            <person name="Ishida J."/>
            <person name="Jiang P.X."/>
            <person name="Jones T."/>
            <person name="Kawai J."/>
            <person name="Kamiya A."/>
            <person name="Meyers C."/>
            <person name="Nakajima M."/>
            <person name="Narusaka M."/>
            <person name="Seki M."/>
            <person name="Sakurai T."/>
            <person name="Satou M."/>
            <person name="Tamse R."/>
            <person name="Vaysberg M."/>
            <person name="Wallender E.K."/>
            <person name="Wong C."/>
            <person name="Yamamura Y."/>
            <person name="Yuan S."/>
            <person name="Shinozaki K."/>
            <person name="Davis R.W."/>
            <person name="Theologis A."/>
            <person name="Ecker J.R."/>
        </authorList>
    </citation>
    <scope>NUCLEOTIDE SEQUENCE [LARGE SCALE MRNA]</scope>
    <source>
        <strain>cv. Columbia</strain>
    </source>
</reference>
<reference key="5">
    <citation type="submission" date="2002-03" db="EMBL/GenBank/DDBJ databases">
        <title>Full-length cDNA from Arabidopsis thaliana.</title>
        <authorList>
            <person name="Brover V.V."/>
            <person name="Troukhan M.E."/>
            <person name="Alexandrov N.A."/>
            <person name="Lu Y.-P."/>
            <person name="Flavell R.B."/>
            <person name="Feldmann K.A."/>
        </authorList>
    </citation>
    <scope>NUCLEOTIDE SEQUENCE [LARGE SCALE MRNA]</scope>
</reference>
<reference key="6">
    <citation type="journal article" date="2008" name="Plant Physiol.">
        <title>The PRA1 gene family in Arabidopsis.</title>
        <authorList>
            <person name="Alvim Kamei C.L."/>
            <person name="Boruc J."/>
            <person name="Vandepoele K."/>
            <person name="Van den Daele H."/>
            <person name="Maes S."/>
            <person name="Russinova E."/>
            <person name="Inze D."/>
            <person name="de Veylder L."/>
        </authorList>
    </citation>
    <scope>SUBUNIT</scope>
    <scope>SUBCELLULAR LOCATION</scope>
    <scope>INTERACTION WITH PRA1B2; PRA1B3; PRA1B4; PRA1B5; PRA1B6 AND PRA1E</scope>
    <scope>GENE FAMILY</scope>
    <scope>NOMENCLATURE</scope>
</reference>
<reference key="7">
    <citation type="journal article" date="2012" name="Mol. Cell. Proteomics">
        <title>Comparative large-scale characterisation of plant vs. mammal proteins reveals similar and idiosyncratic N-alpha acetylation features.</title>
        <authorList>
            <person name="Bienvenut W.V."/>
            <person name="Sumpton D."/>
            <person name="Martinez A."/>
            <person name="Lilla S."/>
            <person name="Espagne C."/>
            <person name="Meinnel T."/>
            <person name="Giglione C."/>
        </authorList>
    </citation>
    <scope>ACETYLATION [LARGE SCALE ANALYSIS] AT ALA-2</scope>
    <scope>CLEAVAGE OF INITIATOR METHIONINE [LARGE SCALE ANALYSIS]</scope>
    <scope>IDENTIFICATION BY MASS SPECTROMETRY [LARGE SCALE ANALYSIS]</scope>
</reference>
<evidence type="ECO:0000250" key="1"/>
<evidence type="ECO:0000255" key="2"/>
<evidence type="ECO:0000269" key="3">
    <source>
    </source>
</evidence>
<evidence type="ECO:0000305" key="4"/>
<evidence type="ECO:0007744" key="5">
    <source>
    </source>
</evidence>